<accession>B4T4M8</accession>
<sequence length="642" mass="73962">MPVITLPDGSQRHYDHPVSPMDVALDIGPGLAKATIAGRVNGELVDASDLIENDATLAIITAKDEEGLEIIRHSCAHLLGHAIKQLWPHTKMAIGPVVDNGFYYDVDLDRTLTQEDVEALEKRMHELAEKNYDVIKKKVSWHDARETFVKRGETYKVAILDENIAHDDKPGLYHHEEYVDMCRGPHVPNMRFCHHFKLMKTAGAYWRGDSNNKMLQRIYGTAWADKKALNAYLQRLEEAAKRDHRKIGKQLDLYHMQEEAPGMVFWHNDGWTIFRELEVFVRSKLKEYQYQEVKGPFMMDRVLWEKTGHWDNYKDAMFTTSSENREYCIKPMNCPGHVQIFNQGLKSYRDLPLRMAEFGSCHRNEPSGALHGLMRVRGFTQDDAHIFCTEEQIRDEVNACIRMVYDMYSTFGFEKIVVKLSTRPDKRIGSDEMWDRAEADLAVALEENNIPFEYQLGEGAFYGPKIEFTLYDCLDRAWQCGTVQLDFSLPSRLSASYVGEDNERKVPVMIHRAILGSMERFIGILTEEFAGFFPTWLAPVQVVVMNITDSQSEYVNELTQKLQNAGIRVKADLRNEKIGFKIREHTLRRVPYMLVCGDKEVEAGKVAVRTRRGKDLGSLDVNDVIEKLQQEIRSRSLQQLEE</sequence>
<reference key="1">
    <citation type="journal article" date="2011" name="J. Bacteriol.">
        <title>Comparative genomics of 28 Salmonella enterica isolates: evidence for CRISPR-mediated adaptive sublineage evolution.</title>
        <authorList>
            <person name="Fricke W.F."/>
            <person name="Mammel M.K."/>
            <person name="McDermott P.F."/>
            <person name="Tartera C."/>
            <person name="White D.G."/>
            <person name="Leclerc J.E."/>
            <person name="Ravel J."/>
            <person name="Cebula T.A."/>
        </authorList>
    </citation>
    <scope>NUCLEOTIDE SEQUENCE [LARGE SCALE GENOMIC DNA]</scope>
    <source>
        <strain>SL254</strain>
    </source>
</reference>
<organism>
    <name type="scientific">Salmonella newport (strain SL254)</name>
    <dbReference type="NCBI Taxonomy" id="423368"/>
    <lineage>
        <taxon>Bacteria</taxon>
        <taxon>Pseudomonadati</taxon>
        <taxon>Pseudomonadota</taxon>
        <taxon>Gammaproteobacteria</taxon>
        <taxon>Enterobacterales</taxon>
        <taxon>Enterobacteriaceae</taxon>
        <taxon>Salmonella</taxon>
    </lineage>
</organism>
<protein>
    <recommendedName>
        <fullName evidence="1">Threonine--tRNA ligase</fullName>
        <ecNumber evidence="1">6.1.1.3</ecNumber>
    </recommendedName>
    <alternativeName>
        <fullName evidence="1">Threonyl-tRNA synthetase</fullName>
        <shortName evidence="1">ThrRS</shortName>
    </alternativeName>
</protein>
<proteinExistence type="inferred from homology"/>
<comment type="function">
    <text evidence="1">Catalyzes the attachment of threonine to tRNA(Thr) in a two-step reaction: L-threonine is first activated by ATP to form Thr-AMP and then transferred to the acceptor end of tRNA(Thr). Also edits incorrectly charged L-seryl-tRNA(Thr).</text>
</comment>
<comment type="catalytic activity">
    <reaction evidence="1">
        <text>tRNA(Thr) + L-threonine + ATP = L-threonyl-tRNA(Thr) + AMP + diphosphate + H(+)</text>
        <dbReference type="Rhea" id="RHEA:24624"/>
        <dbReference type="Rhea" id="RHEA-COMP:9670"/>
        <dbReference type="Rhea" id="RHEA-COMP:9704"/>
        <dbReference type="ChEBI" id="CHEBI:15378"/>
        <dbReference type="ChEBI" id="CHEBI:30616"/>
        <dbReference type="ChEBI" id="CHEBI:33019"/>
        <dbReference type="ChEBI" id="CHEBI:57926"/>
        <dbReference type="ChEBI" id="CHEBI:78442"/>
        <dbReference type="ChEBI" id="CHEBI:78534"/>
        <dbReference type="ChEBI" id="CHEBI:456215"/>
        <dbReference type="EC" id="6.1.1.3"/>
    </reaction>
</comment>
<comment type="cofactor">
    <cofactor evidence="1">
        <name>Zn(2+)</name>
        <dbReference type="ChEBI" id="CHEBI:29105"/>
    </cofactor>
    <text evidence="1">Binds 1 zinc ion per subunit.</text>
</comment>
<comment type="subunit">
    <text evidence="1">Homodimer.</text>
</comment>
<comment type="subcellular location">
    <subcellularLocation>
        <location evidence="1">Cytoplasm</location>
    </subcellularLocation>
</comment>
<comment type="similarity">
    <text evidence="1">Belongs to the class-II aminoacyl-tRNA synthetase family.</text>
</comment>
<dbReference type="EC" id="6.1.1.3" evidence="1"/>
<dbReference type="EMBL" id="CP001113">
    <property type="protein sequence ID" value="ACF64944.1"/>
    <property type="molecule type" value="Genomic_DNA"/>
</dbReference>
<dbReference type="RefSeq" id="WP_001144217.1">
    <property type="nucleotide sequence ID" value="NZ_CCMR01000003.1"/>
</dbReference>
<dbReference type="SMR" id="B4T4M8"/>
<dbReference type="KEGG" id="see:SNSL254_A1444"/>
<dbReference type="HOGENOM" id="CLU_008554_0_1_6"/>
<dbReference type="Proteomes" id="UP000008824">
    <property type="component" value="Chromosome"/>
</dbReference>
<dbReference type="GO" id="GO:0005829">
    <property type="term" value="C:cytosol"/>
    <property type="evidence" value="ECO:0007669"/>
    <property type="project" value="TreeGrafter"/>
</dbReference>
<dbReference type="GO" id="GO:0005524">
    <property type="term" value="F:ATP binding"/>
    <property type="evidence" value="ECO:0007669"/>
    <property type="project" value="UniProtKB-UniRule"/>
</dbReference>
<dbReference type="GO" id="GO:0046872">
    <property type="term" value="F:metal ion binding"/>
    <property type="evidence" value="ECO:0007669"/>
    <property type="project" value="UniProtKB-KW"/>
</dbReference>
<dbReference type="GO" id="GO:0004829">
    <property type="term" value="F:threonine-tRNA ligase activity"/>
    <property type="evidence" value="ECO:0007669"/>
    <property type="project" value="UniProtKB-UniRule"/>
</dbReference>
<dbReference type="GO" id="GO:0000049">
    <property type="term" value="F:tRNA binding"/>
    <property type="evidence" value="ECO:0007669"/>
    <property type="project" value="UniProtKB-KW"/>
</dbReference>
<dbReference type="GO" id="GO:0006435">
    <property type="term" value="P:threonyl-tRNA aminoacylation"/>
    <property type="evidence" value="ECO:0007669"/>
    <property type="project" value="UniProtKB-UniRule"/>
</dbReference>
<dbReference type="CDD" id="cd01667">
    <property type="entry name" value="TGS_ThrRS"/>
    <property type="match status" value="1"/>
</dbReference>
<dbReference type="CDD" id="cd00860">
    <property type="entry name" value="ThrRS_anticodon"/>
    <property type="match status" value="1"/>
</dbReference>
<dbReference type="CDD" id="cd00771">
    <property type="entry name" value="ThrRS_core"/>
    <property type="match status" value="1"/>
</dbReference>
<dbReference type="FunFam" id="3.10.20.30:FF:000005">
    <property type="entry name" value="Threonine--tRNA ligase"/>
    <property type="match status" value="1"/>
</dbReference>
<dbReference type="FunFam" id="3.30.54.20:FF:000002">
    <property type="entry name" value="Threonine--tRNA ligase"/>
    <property type="match status" value="1"/>
</dbReference>
<dbReference type="FunFam" id="3.30.930.10:FF:000002">
    <property type="entry name" value="Threonine--tRNA ligase"/>
    <property type="match status" value="1"/>
</dbReference>
<dbReference type="FunFam" id="3.40.50.800:FF:000001">
    <property type="entry name" value="Threonine--tRNA ligase"/>
    <property type="match status" value="1"/>
</dbReference>
<dbReference type="FunFam" id="3.30.980.10:FF:000005">
    <property type="entry name" value="Threonyl-tRNA synthetase, mitochondrial"/>
    <property type="match status" value="1"/>
</dbReference>
<dbReference type="Gene3D" id="3.10.20.30">
    <property type="match status" value="1"/>
</dbReference>
<dbReference type="Gene3D" id="3.30.54.20">
    <property type="match status" value="1"/>
</dbReference>
<dbReference type="Gene3D" id="3.40.50.800">
    <property type="entry name" value="Anticodon-binding domain"/>
    <property type="match status" value="1"/>
</dbReference>
<dbReference type="Gene3D" id="3.30.930.10">
    <property type="entry name" value="Bira Bifunctional Protein, Domain 2"/>
    <property type="match status" value="1"/>
</dbReference>
<dbReference type="Gene3D" id="3.30.980.10">
    <property type="entry name" value="Threonyl-trna Synthetase, Chain A, domain 2"/>
    <property type="match status" value="1"/>
</dbReference>
<dbReference type="HAMAP" id="MF_00184">
    <property type="entry name" value="Thr_tRNA_synth"/>
    <property type="match status" value="1"/>
</dbReference>
<dbReference type="InterPro" id="IPR002314">
    <property type="entry name" value="aa-tRNA-synt_IIb"/>
</dbReference>
<dbReference type="InterPro" id="IPR006195">
    <property type="entry name" value="aa-tRNA-synth_II"/>
</dbReference>
<dbReference type="InterPro" id="IPR045864">
    <property type="entry name" value="aa-tRNA-synth_II/BPL/LPL"/>
</dbReference>
<dbReference type="InterPro" id="IPR004154">
    <property type="entry name" value="Anticodon-bd"/>
</dbReference>
<dbReference type="InterPro" id="IPR036621">
    <property type="entry name" value="Anticodon-bd_dom_sf"/>
</dbReference>
<dbReference type="InterPro" id="IPR012675">
    <property type="entry name" value="Beta-grasp_dom_sf"/>
</dbReference>
<dbReference type="InterPro" id="IPR004095">
    <property type="entry name" value="TGS"/>
</dbReference>
<dbReference type="InterPro" id="IPR012676">
    <property type="entry name" value="TGS-like"/>
</dbReference>
<dbReference type="InterPro" id="IPR002320">
    <property type="entry name" value="Thr-tRNA-ligase_IIa"/>
</dbReference>
<dbReference type="InterPro" id="IPR018163">
    <property type="entry name" value="Thr/Ala-tRNA-synth_IIc_edit"/>
</dbReference>
<dbReference type="InterPro" id="IPR047246">
    <property type="entry name" value="ThrRS_anticodon"/>
</dbReference>
<dbReference type="InterPro" id="IPR033728">
    <property type="entry name" value="ThrRS_core"/>
</dbReference>
<dbReference type="InterPro" id="IPR012947">
    <property type="entry name" value="tRNA_SAD"/>
</dbReference>
<dbReference type="NCBIfam" id="TIGR00418">
    <property type="entry name" value="thrS"/>
    <property type="match status" value="1"/>
</dbReference>
<dbReference type="PANTHER" id="PTHR11451:SF44">
    <property type="entry name" value="THREONINE--TRNA LIGASE, CHLOROPLASTIC_MITOCHONDRIAL 2"/>
    <property type="match status" value="1"/>
</dbReference>
<dbReference type="PANTHER" id="PTHR11451">
    <property type="entry name" value="THREONINE-TRNA LIGASE"/>
    <property type="match status" value="1"/>
</dbReference>
<dbReference type="Pfam" id="PF03129">
    <property type="entry name" value="HGTP_anticodon"/>
    <property type="match status" value="1"/>
</dbReference>
<dbReference type="Pfam" id="PF02824">
    <property type="entry name" value="TGS"/>
    <property type="match status" value="1"/>
</dbReference>
<dbReference type="Pfam" id="PF00587">
    <property type="entry name" value="tRNA-synt_2b"/>
    <property type="match status" value="1"/>
</dbReference>
<dbReference type="Pfam" id="PF07973">
    <property type="entry name" value="tRNA_SAD"/>
    <property type="match status" value="1"/>
</dbReference>
<dbReference type="PRINTS" id="PR01047">
    <property type="entry name" value="TRNASYNTHTHR"/>
</dbReference>
<dbReference type="SMART" id="SM00863">
    <property type="entry name" value="tRNA_SAD"/>
    <property type="match status" value="1"/>
</dbReference>
<dbReference type="SUPFAM" id="SSF52954">
    <property type="entry name" value="Class II aaRS ABD-related"/>
    <property type="match status" value="1"/>
</dbReference>
<dbReference type="SUPFAM" id="SSF55681">
    <property type="entry name" value="Class II aaRS and biotin synthetases"/>
    <property type="match status" value="1"/>
</dbReference>
<dbReference type="SUPFAM" id="SSF81271">
    <property type="entry name" value="TGS-like"/>
    <property type="match status" value="1"/>
</dbReference>
<dbReference type="SUPFAM" id="SSF55186">
    <property type="entry name" value="ThrRS/AlaRS common domain"/>
    <property type="match status" value="1"/>
</dbReference>
<dbReference type="PROSITE" id="PS50862">
    <property type="entry name" value="AA_TRNA_LIGASE_II"/>
    <property type="match status" value="1"/>
</dbReference>
<dbReference type="PROSITE" id="PS51880">
    <property type="entry name" value="TGS"/>
    <property type="match status" value="1"/>
</dbReference>
<name>SYT_SALNS</name>
<gene>
    <name evidence="1" type="primary">thrS</name>
    <name type="ordered locus">SNSL254_A1444</name>
</gene>
<evidence type="ECO:0000255" key="1">
    <source>
        <dbReference type="HAMAP-Rule" id="MF_00184"/>
    </source>
</evidence>
<evidence type="ECO:0000255" key="2">
    <source>
        <dbReference type="PROSITE-ProRule" id="PRU01228"/>
    </source>
</evidence>
<feature type="chain" id="PRO_1000098610" description="Threonine--tRNA ligase">
    <location>
        <begin position="1"/>
        <end position="642"/>
    </location>
</feature>
<feature type="domain" description="TGS" evidence="2">
    <location>
        <begin position="1"/>
        <end position="61"/>
    </location>
</feature>
<feature type="region of interest" description="Catalytic" evidence="1">
    <location>
        <begin position="243"/>
        <end position="534"/>
    </location>
</feature>
<feature type="binding site" evidence="1">
    <location>
        <position position="334"/>
    </location>
    <ligand>
        <name>Zn(2+)</name>
        <dbReference type="ChEBI" id="CHEBI:29105"/>
    </ligand>
</feature>
<feature type="binding site" evidence="1">
    <location>
        <position position="385"/>
    </location>
    <ligand>
        <name>Zn(2+)</name>
        <dbReference type="ChEBI" id="CHEBI:29105"/>
    </ligand>
</feature>
<feature type="binding site" evidence="1">
    <location>
        <position position="511"/>
    </location>
    <ligand>
        <name>Zn(2+)</name>
        <dbReference type="ChEBI" id="CHEBI:29105"/>
    </ligand>
</feature>
<keyword id="KW-0030">Aminoacyl-tRNA synthetase</keyword>
<keyword id="KW-0067">ATP-binding</keyword>
<keyword id="KW-0963">Cytoplasm</keyword>
<keyword id="KW-0436">Ligase</keyword>
<keyword id="KW-0479">Metal-binding</keyword>
<keyword id="KW-0547">Nucleotide-binding</keyword>
<keyword id="KW-0648">Protein biosynthesis</keyword>
<keyword id="KW-0694">RNA-binding</keyword>
<keyword id="KW-0820">tRNA-binding</keyword>
<keyword id="KW-0862">Zinc</keyword>